<keyword id="KW-0007">Acetylation</keyword>
<keyword id="KW-0963">Cytoplasm</keyword>
<keyword id="KW-0509">mRNA transport</keyword>
<keyword id="KW-0906">Nuclear pore complex</keyword>
<keyword id="KW-0539">Nucleus</keyword>
<keyword id="KW-0597">Phosphoprotein</keyword>
<keyword id="KW-0653">Protein transport</keyword>
<keyword id="KW-1185">Reference proteome</keyword>
<keyword id="KW-0811">Translocation</keyword>
<keyword id="KW-0813">Transport</keyword>
<organism>
    <name type="scientific">Mus musculus</name>
    <name type="common">Mouse</name>
    <dbReference type="NCBI Taxonomy" id="10090"/>
    <lineage>
        <taxon>Eukaryota</taxon>
        <taxon>Metazoa</taxon>
        <taxon>Chordata</taxon>
        <taxon>Craniata</taxon>
        <taxon>Vertebrata</taxon>
        <taxon>Euteleostomi</taxon>
        <taxon>Mammalia</taxon>
        <taxon>Eutheria</taxon>
        <taxon>Euarchontoglires</taxon>
        <taxon>Glires</taxon>
        <taxon>Rodentia</taxon>
        <taxon>Myomorpha</taxon>
        <taxon>Muroidea</taxon>
        <taxon>Muridae</taxon>
        <taxon>Murinae</taxon>
        <taxon>Mus</taxon>
        <taxon>Mus</taxon>
    </lineage>
</organism>
<sequence>MAHITINQYLQQVYEAIDTRDGASCAELVSFKHPHVANPRLQMASPEEKCQQVLEPPYDEMFAAHLRCTYAVGNHDFIEAYKCQTVIVQSFLRAFQAHKEENWALPVMYAVALDLRIFANNADQQLVKKGKSKVGDMLEKAAELLMSCFRVCASDTRAGIEDSKKWGMLFLVNQLFKIYFKINKLHLCKPLIRAIDSSNLKDDYSTAQRITYKYYVGRKAMFDSDFKQAEEYLSFAFEHCHRSSQKNKRMILIYLLPVKMLLGHMPTIELLRKYHLMQFSEVTKAVSEGNLLLLNEALAKHETFFIRCGIFLILEKLKIITYRNLFKKVYLLLKTHQLSLDAFLVALKFMHVEDVDIDEVQCILANLIYMGHIKGYISHQHQKLVVSKQNPFPPLSTVC</sequence>
<proteinExistence type="evidence at protein level"/>
<reference key="1">
    <citation type="journal article" date="2005" name="Science">
        <title>The transcriptional landscape of the mammalian genome.</title>
        <authorList>
            <person name="Carninci P."/>
            <person name="Kasukawa T."/>
            <person name="Katayama S."/>
            <person name="Gough J."/>
            <person name="Frith M.C."/>
            <person name="Maeda N."/>
            <person name="Oyama R."/>
            <person name="Ravasi T."/>
            <person name="Lenhard B."/>
            <person name="Wells C."/>
            <person name="Kodzius R."/>
            <person name="Shimokawa K."/>
            <person name="Bajic V.B."/>
            <person name="Brenner S.E."/>
            <person name="Batalov S."/>
            <person name="Forrest A.R."/>
            <person name="Zavolan M."/>
            <person name="Davis M.J."/>
            <person name="Wilming L.G."/>
            <person name="Aidinis V."/>
            <person name="Allen J.E."/>
            <person name="Ambesi-Impiombato A."/>
            <person name="Apweiler R."/>
            <person name="Aturaliya R.N."/>
            <person name="Bailey T.L."/>
            <person name="Bansal M."/>
            <person name="Baxter L."/>
            <person name="Beisel K.W."/>
            <person name="Bersano T."/>
            <person name="Bono H."/>
            <person name="Chalk A.M."/>
            <person name="Chiu K.P."/>
            <person name="Choudhary V."/>
            <person name="Christoffels A."/>
            <person name="Clutterbuck D.R."/>
            <person name="Crowe M.L."/>
            <person name="Dalla E."/>
            <person name="Dalrymple B.P."/>
            <person name="de Bono B."/>
            <person name="Della Gatta G."/>
            <person name="di Bernardo D."/>
            <person name="Down T."/>
            <person name="Engstrom P."/>
            <person name="Fagiolini M."/>
            <person name="Faulkner G."/>
            <person name="Fletcher C.F."/>
            <person name="Fukushima T."/>
            <person name="Furuno M."/>
            <person name="Futaki S."/>
            <person name="Gariboldi M."/>
            <person name="Georgii-Hemming P."/>
            <person name="Gingeras T.R."/>
            <person name="Gojobori T."/>
            <person name="Green R.E."/>
            <person name="Gustincich S."/>
            <person name="Harbers M."/>
            <person name="Hayashi Y."/>
            <person name="Hensch T.K."/>
            <person name="Hirokawa N."/>
            <person name="Hill D."/>
            <person name="Huminiecki L."/>
            <person name="Iacono M."/>
            <person name="Ikeo K."/>
            <person name="Iwama A."/>
            <person name="Ishikawa T."/>
            <person name="Jakt M."/>
            <person name="Kanapin A."/>
            <person name="Katoh M."/>
            <person name="Kawasawa Y."/>
            <person name="Kelso J."/>
            <person name="Kitamura H."/>
            <person name="Kitano H."/>
            <person name="Kollias G."/>
            <person name="Krishnan S.P."/>
            <person name="Kruger A."/>
            <person name="Kummerfeld S.K."/>
            <person name="Kurochkin I.V."/>
            <person name="Lareau L.F."/>
            <person name="Lazarevic D."/>
            <person name="Lipovich L."/>
            <person name="Liu J."/>
            <person name="Liuni S."/>
            <person name="McWilliam S."/>
            <person name="Madan Babu M."/>
            <person name="Madera M."/>
            <person name="Marchionni L."/>
            <person name="Matsuda H."/>
            <person name="Matsuzawa S."/>
            <person name="Miki H."/>
            <person name="Mignone F."/>
            <person name="Miyake S."/>
            <person name="Morris K."/>
            <person name="Mottagui-Tabar S."/>
            <person name="Mulder N."/>
            <person name="Nakano N."/>
            <person name="Nakauchi H."/>
            <person name="Ng P."/>
            <person name="Nilsson R."/>
            <person name="Nishiguchi S."/>
            <person name="Nishikawa S."/>
            <person name="Nori F."/>
            <person name="Ohara O."/>
            <person name="Okazaki Y."/>
            <person name="Orlando V."/>
            <person name="Pang K.C."/>
            <person name="Pavan W.J."/>
            <person name="Pavesi G."/>
            <person name="Pesole G."/>
            <person name="Petrovsky N."/>
            <person name="Piazza S."/>
            <person name="Reed J."/>
            <person name="Reid J.F."/>
            <person name="Ring B.Z."/>
            <person name="Ringwald M."/>
            <person name="Rost B."/>
            <person name="Ruan Y."/>
            <person name="Salzberg S.L."/>
            <person name="Sandelin A."/>
            <person name="Schneider C."/>
            <person name="Schoenbach C."/>
            <person name="Sekiguchi K."/>
            <person name="Semple C.A."/>
            <person name="Seno S."/>
            <person name="Sessa L."/>
            <person name="Sheng Y."/>
            <person name="Shibata Y."/>
            <person name="Shimada H."/>
            <person name="Shimada K."/>
            <person name="Silva D."/>
            <person name="Sinclair B."/>
            <person name="Sperling S."/>
            <person name="Stupka E."/>
            <person name="Sugiura K."/>
            <person name="Sultana R."/>
            <person name="Takenaka Y."/>
            <person name="Taki K."/>
            <person name="Tammoja K."/>
            <person name="Tan S.L."/>
            <person name="Tang S."/>
            <person name="Taylor M.S."/>
            <person name="Tegner J."/>
            <person name="Teichmann S.A."/>
            <person name="Ueda H.R."/>
            <person name="van Nimwegen E."/>
            <person name="Verardo R."/>
            <person name="Wei C.L."/>
            <person name="Yagi K."/>
            <person name="Yamanishi H."/>
            <person name="Zabarovsky E."/>
            <person name="Zhu S."/>
            <person name="Zimmer A."/>
            <person name="Hide W."/>
            <person name="Bult C."/>
            <person name="Grimmond S.M."/>
            <person name="Teasdale R.D."/>
            <person name="Liu E.T."/>
            <person name="Brusic V."/>
            <person name="Quackenbush J."/>
            <person name="Wahlestedt C."/>
            <person name="Mattick J.S."/>
            <person name="Hume D.A."/>
            <person name="Kai C."/>
            <person name="Sasaki D."/>
            <person name="Tomaru Y."/>
            <person name="Fukuda S."/>
            <person name="Kanamori-Katayama M."/>
            <person name="Suzuki M."/>
            <person name="Aoki J."/>
            <person name="Arakawa T."/>
            <person name="Iida J."/>
            <person name="Imamura K."/>
            <person name="Itoh M."/>
            <person name="Kato T."/>
            <person name="Kawaji H."/>
            <person name="Kawagashira N."/>
            <person name="Kawashima T."/>
            <person name="Kojima M."/>
            <person name="Kondo S."/>
            <person name="Konno H."/>
            <person name="Nakano K."/>
            <person name="Ninomiya N."/>
            <person name="Nishio T."/>
            <person name="Okada M."/>
            <person name="Plessy C."/>
            <person name="Shibata K."/>
            <person name="Shiraki T."/>
            <person name="Suzuki S."/>
            <person name="Tagami M."/>
            <person name="Waki K."/>
            <person name="Watahiki A."/>
            <person name="Okamura-Oho Y."/>
            <person name="Suzuki H."/>
            <person name="Kawai J."/>
            <person name="Hayashizaki Y."/>
        </authorList>
    </citation>
    <scope>NUCLEOTIDE SEQUENCE [LARGE SCALE MRNA]</scope>
    <source>
        <strain>C57BL/6J</strain>
        <tissue>Cerebellum</tissue>
        <tissue>Corpora quadrigemina</tissue>
    </source>
</reference>
<reference key="2">
    <citation type="journal article" date="2004" name="Genome Res.">
        <title>The status, quality, and expansion of the NIH full-length cDNA project: the Mammalian Gene Collection (MGC).</title>
        <authorList>
            <consortium name="The MGC Project Team"/>
        </authorList>
    </citation>
    <scope>NUCLEOTIDE SEQUENCE [LARGE SCALE MRNA]</scope>
</reference>
<reference key="3">
    <citation type="journal article" date="2010" name="Cell">
        <title>A tissue-specific atlas of mouse protein phosphorylation and expression.</title>
        <authorList>
            <person name="Huttlin E.L."/>
            <person name="Jedrychowski M.P."/>
            <person name="Elias J.E."/>
            <person name="Goswami T."/>
            <person name="Rad R."/>
            <person name="Beausoleil S.A."/>
            <person name="Villen J."/>
            <person name="Haas W."/>
            <person name="Sowa M.E."/>
            <person name="Gygi S.P."/>
        </authorList>
    </citation>
    <scope>IDENTIFICATION BY MASS SPECTROMETRY [LARGE SCALE ANALYSIS]</scope>
    <source>
        <tissue>Brain</tissue>
        <tissue>Lung</tissue>
        <tissue>Pancreas</tissue>
        <tissue>Spleen</tissue>
        <tissue>Testis</tissue>
    </source>
</reference>
<reference key="4">
    <citation type="journal article" date="2010" name="J. Immunol.">
        <title>Critical role of Pcid2 in B cell survival through the regulation of MAD2 expression.</title>
        <authorList>
            <person name="Nakaya T."/>
            <person name="Kuwahara K."/>
            <person name="Ohta K."/>
            <person name="Kitabatake M."/>
            <person name="Toda T."/>
            <person name="Takeda N."/>
            <person name="Tani T."/>
            <person name="Kondo E."/>
            <person name="Sakaguchi N."/>
        </authorList>
    </citation>
    <scope>FUNCTION</scope>
    <scope>DEVELOPMENTAL STAGE</scope>
</reference>
<reference key="5">
    <citation type="journal article" date="2017" name="Nat. Commun.">
        <title>Suppression of SRCAP chromatin remodelling complex and restriction of lymphoid lineage commitment by Pcid2.</title>
        <authorList>
            <person name="Ye B."/>
            <person name="Liu B."/>
            <person name="Yang L."/>
            <person name="Huang G."/>
            <person name="Hao L."/>
            <person name="Xia P."/>
            <person name="Wang S."/>
            <person name="Du Y."/>
            <person name="Qin X."/>
            <person name="Zhu P."/>
            <person name="Wu J."/>
            <person name="Sakaguchi N."/>
            <person name="Zhang J."/>
            <person name="Fan Z."/>
        </authorList>
    </citation>
    <scope>FUNCTION</scope>
    <scope>INTERACTION WITH ZNHIT1</scope>
    <scope>TISSUE SPECIFICITY</scope>
    <scope>DISRUPTION PHENOTYPE</scope>
</reference>
<evidence type="ECO:0000250" key="1">
    <source>
        <dbReference type="UniProtKB" id="Q5JVF3"/>
    </source>
</evidence>
<evidence type="ECO:0000255" key="2">
    <source>
        <dbReference type="PROSITE-ProRule" id="PRU01185"/>
    </source>
</evidence>
<evidence type="ECO:0000269" key="3">
    <source>
    </source>
</evidence>
<evidence type="ECO:0000269" key="4">
    <source>
    </source>
</evidence>
<evidence type="ECO:0000305" key="5"/>
<comment type="function">
    <text evidence="1 3 4">Required for B-cell survival through the regulation of the expression of cell-cycle checkpoint MAD2L1 protein during B cell differentiation (PubMed:20870947). As a component of the TREX-2 complex, involved in the export of mRNAs to the cytoplasm through the nuclear pores (By similarity). Binds and stabilizes BRCA2 and is thus involved in the control of R-loop-associated DNA damage and transcription-associated genomic instability (By similarity). Blocks the activity of the SRCAP chromatin remodeling complex by interacting with SRCAP complex member ZNHIT1 and inhibiting its interaction with the complex (PubMed:29138493). This prevents the deposition of histone variant H2AZ1/H2A.Z at the nucleosomes of key lymphoid fate regulator genes which suppresses their expression and restricts lymphoid lineage commitment (PubMed:29138493).</text>
</comment>
<comment type="subunit">
    <text evidence="1 4">Component of the nuclear pore complex (NPC)-associated TREX-2 complex (transcription and export complex 2), composed of at least GANP, 2 copies of ENY2, PCID2, SEM1/DSS1, and either centrin CETN2 or centrin CETN3. The TREX-2 complex also associates with ALYREF/ALY and with the nucleoporin NUP153 (By similarity). Interacts with BRCA2 (By similarity). Interacts with SRCAP chromatin remodeling complex component ZNHIT1; the interaction results in inhibition of SRCAP complex activity, preventing the deposition of histone variant H2AZ1/H2A.Z to lymphoid fate regulator genes and restricting lymphoid lineage commitment (PubMed:29138493).</text>
</comment>
<comment type="subcellular location">
    <subcellularLocation>
        <location evidence="1">Cytoplasm</location>
    </subcellularLocation>
    <subcellularLocation>
        <location evidence="1">Nucleus</location>
        <location evidence="1">Nuclear pore complex</location>
    </subcellularLocation>
</comment>
<comment type="tissue specificity">
    <text evidence="4">Highly expressed in bone marrow and haematopoietic progenitor cells but is almost undetectable in mature blood cells.</text>
</comment>
<comment type="developmental stage">
    <text evidence="3">In B lineage cells, expressed in a stage-dependent manner at high levels in bone marrow pre-B and immature B-cells, and in spleen transitional 1 and follicular B-cells, but at lower levels in pro-B, transitional 2, and marginal zone B-cells.</text>
</comment>
<comment type="disruption phenotype">
    <text evidence="4">Conditional knockout in bone marrow increases lymphoid cell numbers but decreases the number of myeloid cells (PubMed:29138493). Decreased bone marrow cellularity, enlargement of thymus and cervical lymph nodes with an increased number of lymphocytes, increased lymphocyte numbers in peripheral blood, decreased numbers of granulocytes and monocytes, enrichment of transcription factor Spi1/PU.1 at the promoters of lymphoid fate regulator genes, increased expression of lymphoid fate regulator genes, and enhanced lymphoid differentiation of hematopoietic multipotent progenitor cells (PubMed:29138493). No effect on red blood cell or platelet numbers (PubMed:29138493).</text>
</comment>
<comment type="similarity">
    <text evidence="5">Belongs to the CSN12 family.</text>
</comment>
<feature type="initiator methionine" description="Removed" evidence="1">
    <location>
        <position position="1"/>
    </location>
</feature>
<feature type="chain" id="PRO_0000121030" description="PCI domain-containing protein 2">
    <location>
        <begin position="2"/>
        <end position="399"/>
    </location>
</feature>
<feature type="domain" description="PCI" evidence="2">
    <location>
        <begin position="210"/>
        <end position="391"/>
    </location>
</feature>
<feature type="modified residue" description="N-acetylalanine" evidence="1">
    <location>
        <position position="2"/>
    </location>
</feature>
<feature type="modified residue" description="Phosphoserine" evidence="1">
    <location>
        <position position="45"/>
    </location>
</feature>
<feature type="sequence conflict" description="In Ref. 1; BAC31414." evidence="5" ref="1">
    <original>K</original>
    <variation>N</variation>
    <location>
        <position position="227"/>
    </location>
</feature>
<protein>
    <recommendedName>
        <fullName>PCI domain-containing protein 2</fullName>
    </recommendedName>
    <alternativeName>
        <fullName>CSN12-like protein</fullName>
    </alternativeName>
</protein>
<accession>Q8BFV2</accession>
<accession>Q147Z6</accession>
<accession>Q8C951</accession>
<gene>
    <name type="primary">Pcid2</name>
</gene>
<dbReference type="EMBL" id="AK045796">
    <property type="protein sequence ID" value="BAC32494.1"/>
    <property type="molecule type" value="mRNA"/>
</dbReference>
<dbReference type="EMBL" id="AK042945">
    <property type="protein sequence ID" value="BAC31414.1"/>
    <property type="molecule type" value="mRNA"/>
</dbReference>
<dbReference type="EMBL" id="AK048722">
    <property type="protein sequence ID" value="BAC33434.1"/>
    <property type="molecule type" value="mRNA"/>
</dbReference>
<dbReference type="EMBL" id="AK163697">
    <property type="protein sequence ID" value="BAE37463.1"/>
    <property type="molecule type" value="mRNA"/>
</dbReference>
<dbReference type="EMBL" id="BC118533">
    <property type="protein sequence ID" value="AAI18534.1"/>
    <property type="molecule type" value="mRNA"/>
</dbReference>
<dbReference type="CCDS" id="CCDS52484.1"/>
<dbReference type="RefSeq" id="NP_848823.2">
    <property type="nucleotide sequence ID" value="NM_178708.3"/>
</dbReference>
<dbReference type="SMR" id="Q8BFV2"/>
<dbReference type="BioGRID" id="231489">
    <property type="interactions" value="9"/>
</dbReference>
<dbReference type="FunCoup" id="Q8BFV2">
    <property type="interactions" value="3888"/>
</dbReference>
<dbReference type="IntAct" id="Q8BFV2">
    <property type="interactions" value="1"/>
</dbReference>
<dbReference type="STRING" id="10090.ENSMUSP00000133204"/>
<dbReference type="iPTMnet" id="Q8BFV2"/>
<dbReference type="PhosphoSitePlus" id="Q8BFV2"/>
<dbReference type="SwissPalm" id="Q8BFV2"/>
<dbReference type="PaxDb" id="10090-ENSMUSP00000133204"/>
<dbReference type="ProteomicsDB" id="294345"/>
<dbReference type="Pumba" id="Q8BFV2"/>
<dbReference type="Antibodypedia" id="25858">
    <property type="antibodies" value="92 antibodies from 16 providers"/>
</dbReference>
<dbReference type="DNASU" id="234069"/>
<dbReference type="Ensembl" id="ENSMUST00000164416.8">
    <property type="protein sequence ID" value="ENSMUSP00000133204.2"/>
    <property type="gene ID" value="ENSMUSG00000038542.15"/>
</dbReference>
<dbReference type="GeneID" id="234069"/>
<dbReference type="KEGG" id="mmu:234069"/>
<dbReference type="UCSC" id="uc012fzt.1">
    <property type="organism name" value="mouse"/>
</dbReference>
<dbReference type="AGR" id="MGI:2443003"/>
<dbReference type="CTD" id="55795"/>
<dbReference type="MGI" id="MGI:2443003">
    <property type="gene designation" value="Pcid2"/>
</dbReference>
<dbReference type="VEuPathDB" id="HostDB:ENSMUSG00000038542"/>
<dbReference type="eggNOG" id="KOG2688">
    <property type="taxonomic scope" value="Eukaryota"/>
</dbReference>
<dbReference type="GeneTree" id="ENSGT00390000001101"/>
<dbReference type="HOGENOM" id="CLU_031567_2_0_1"/>
<dbReference type="InParanoid" id="Q8BFV2"/>
<dbReference type="OMA" id="INRMFTL"/>
<dbReference type="OrthoDB" id="10252687at2759"/>
<dbReference type="PhylomeDB" id="Q8BFV2"/>
<dbReference type="TreeFam" id="TF106136"/>
<dbReference type="BioGRID-ORCS" id="234069">
    <property type="hits" value="24 hits in 72 CRISPR screens"/>
</dbReference>
<dbReference type="ChiTaRS" id="Pcid2">
    <property type="organism name" value="mouse"/>
</dbReference>
<dbReference type="PRO" id="PR:Q8BFV2"/>
<dbReference type="Proteomes" id="UP000000589">
    <property type="component" value="Chromosome 8"/>
</dbReference>
<dbReference type="RNAct" id="Q8BFV2">
    <property type="molecule type" value="protein"/>
</dbReference>
<dbReference type="Bgee" id="ENSMUSG00000038542">
    <property type="expression patterns" value="Expressed in ileal epithelium and 263 other cell types or tissues"/>
</dbReference>
<dbReference type="ExpressionAtlas" id="Q8BFV2">
    <property type="expression patterns" value="baseline and differential"/>
</dbReference>
<dbReference type="GO" id="GO:0005737">
    <property type="term" value="C:cytoplasm"/>
    <property type="evidence" value="ECO:0000250"/>
    <property type="project" value="UniProtKB"/>
</dbReference>
<dbReference type="GO" id="GO:0044615">
    <property type="term" value="C:nuclear pore nuclear basket"/>
    <property type="evidence" value="ECO:0000250"/>
    <property type="project" value="UniProtKB"/>
</dbReference>
<dbReference type="GO" id="GO:0005634">
    <property type="term" value="C:nucleus"/>
    <property type="evidence" value="ECO:0000250"/>
    <property type="project" value="UniProtKB"/>
</dbReference>
<dbReference type="GO" id="GO:0070390">
    <property type="term" value="C:transcription export complex 2"/>
    <property type="evidence" value="ECO:0000250"/>
    <property type="project" value="UniProtKB"/>
</dbReference>
<dbReference type="GO" id="GO:0003690">
    <property type="term" value="F:double-stranded DNA binding"/>
    <property type="evidence" value="ECO:0007669"/>
    <property type="project" value="InterPro"/>
</dbReference>
<dbReference type="GO" id="GO:0003723">
    <property type="term" value="F:RNA binding"/>
    <property type="evidence" value="ECO:0007669"/>
    <property type="project" value="InterPro"/>
</dbReference>
<dbReference type="GO" id="GO:0045814">
    <property type="term" value="P:negative regulation of gene expression, epigenetic"/>
    <property type="evidence" value="ECO:0000315"/>
    <property type="project" value="UniProtKB"/>
</dbReference>
<dbReference type="GO" id="GO:1905457">
    <property type="term" value="P:negative regulation of lymphoid progenitor cell differentiation"/>
    <property type="evidence" value="ECO:0000315"/>
    <property type="project" value="UniProtKB"/>
</dbReference>
<dbReference type="GO" id="GO:0016973">
    <property type="term" value="P:poly(A)+ mRNA export from nucleus"/>
    <property type="evidence" value="ECO:0000250"/>
    <property type="project" value="UniProtKB"/>
</dbReference>
<dbReference type="GO" id="GO:0045579">
    <property type="term" value="P:positive regulation of B cell differentiation"/>
    <property type="evidence" value="ECO:0000315"/>
    <property type="project" value="UniProtKB"/>
</dbReference>
<dbReference type="GO" id="GO:0015031">
    <property type="term" value="P:protein transport"/>
    <property type="evidence" value="ECO:0007669"/>
    <property type="project" value="UniProtKB-KW"/>
</dbReference>
<dbReference type="GO" id="GO:0048536">
    <property type="term" value="P:spleen development"/>
    <property type="evidence" value="ECO:0000315"/>
    <property type="project" value="UniProtKB"/>
</dbReference>
<dbReference type="FunFam" id="1.10.10.10:FF:000146">
    <property type="entry name" value="PCI domain-containing protein 2 homolog"/>
    <property type="match status" value="1"/>
</dbReference>
<dbReference type="Gene3D" id="1.10.10.10">
    <property type="entry name" value="Winged helix-like DNA-binding domain superfamily/Winged helix DNA-binding domain"/>
    <property type="match status" value="1"/>
</dbReference>
<dbReference type="InterPro" id="IPR045114">
    <property type="entry name" value="Csn12-like"/>
</dbReference>
<dbReference type="InterPro" id="IPR000717">
    <property type="entry name" value="PCI_dom"/>
</dbReference>
<dbReference type="InterPro" id="IPR036388">
    <property type="entry name" value="WH-like_DNA-bd_sf"/>
</dbReference>
<dbReference type="PANTHER" id="PTHR12732:SF0">
    <property type="entry name" value="PCI DOMAIN-CONTAINING PROTEIN 2"/>
    <property type="match status" value="1"/>
</dbReference>
<dbReference type="PANTHER" id="PTHR12732">
    <property type="entry name" value="UNCHARACTERIZED PROTEASOME COMPONENT REGION PCI-CONTAINING"/>
    <property type="match status" value="1"/>
</dbReference>
<dbReference type="Pfam" id="PF01399">
    <property type="entry name" value="PCI"/>
    <property type="match status" value="1"/>
</dbReference>
<dbReference type="SMART" id="SM00753">
    <property type="entry name" value="PAM"/>
    <property type="match status" value="1"/>
</dbReference>
<dbReference type="PROSITE" id="PS50250">
    <property type="entry name" value="PCI"/>
    <property type="match status" value="1"/>
</dbReference>
<name>PCID2_MOUSE</name>